<gene>
    <name evidence="1" type="primary">ureA</name>
    <name type="ordered locus">Pnap_0977</name>
</gene>
<name>URE3_POLNA</name>
<protein>
    <recommendedName>
        <fullName evidence="1">Urease subunit gamma</fullName>
        <ecNumber evidence="1">3.5.1.5</ecNumber>
    </recommendedName>
    <alternativeName>
        <fullName evidence="1">Urea amidohydrolase subunit gamma</fullName>
    </alternativeName>
</protein>
<accession>A1VKW6</accession>
<reference key="1">
    <citation type="journal article" date="2009" name="Environ. Microbiol.">
        <title>The genome of Polaromonas naphthalenivorans strain CJ2, isolated from coal tar-contaminated sediment, reveals physiological and metabolic versatility and evolution through extensive horizontal gene transfer.</title>
        <authorList>
            <person name="Yagi J.M."/>
            <person name="Sims D."/>
            <person name="Brettin T."/>
            <person name="Bruce D."/>
            <person name="Madsen E.L."/>
        </authorList>
    </citation>
    <scope>NUCLEOTIDE SEQUENCE [LARGE SCALE GENOMIC DNA]</scope>
    <source>
        <strain>CJ2</strain>
    </source>
</reference>
<dbReference type="EC" id="3.5.1.5" evidence="1"/>
<dbReference type="EMBL" id="CP000529">
    <property type="protein sequence ID" value="ABM36294.1"/>
    <property type="molecule type" value="Genomic_DNA"/>
</dbReference>
<dbReference type="RefSeq" id="WP_011800388.1">
    <property type="nucleotide sequence ID" value="NC_008781.1"/>
</dbReference>
<dbReference type="SMR" id="A1VKW6"/>
<dbReference type="STRING" id="365044.Pnap_0977"/>
<dbReference type="KEGG" id="pna:Pnap_0977"/>
<dbReference type="eggNOG" id="COG0831">
    <property type="taxonomic scope" value="Bacteria"/>
</dbReference>
<dbReference type="HOGENOM" id="CLU_145825_1_0_4"/>
<dbReference type="OrthoDB" id="9797217at2"/>
<dbReference type="UniPathway" id="UPA00258">
    <property type="reaction ID" value="UER00370"/>
</dbReference>
<dbReference type="Proteomes" id="UP000000644">
    <property type="component" value="Chromosome"/>
</dbReference>
<dbReference type="GO" id="GO:0005737">
    <property type="term" value="C:cytoplasm"/>
    <property type="evidence" value="ECO:0007669"/>
    <property type="project" value="UniProtKB-SubCell"/>
</dbReference>
<dbReference type="GO" id="GO:0016151">
    <property type="term" value="F:nickel cation binding"/>
    <property type="evidence" value="ECO:0007669"/>
    <property type="project" value="InterPro"/>
</dbReference>
<dbReference type="GO" id="GO:0009039">
    <property type="term" value="F:urease activity"/>
    <property type="evidence" value="ECO:0007669"/>
    <property type="project" value="UniProtKB-UniRule"/>
</dbReference>
<dbReference type="GO" id="GO:0043419">
    <property type="term" value="P:urea catabolic process"/>
    <property type="evidence" value="ECO:0007669"/>
    <property type="project" value="UniProtKB-UniRule"/>
</dbReference>
<dbReference type="CDD" id="cd00390">
    <property type="entry name" value="Urease_gamma"/>
    <property type="match status" value="1"/>
</dbReference>
<dbReference type="Gene3D" id="3.30.280.10">
    <property type="entry name" value="Urease, gamma-like subunit"/>
    <property type="match status" value="1"/>
</dbReference>
<dbReference type="HAMAP" id="MF_00739">
    <property type="entry name" value="Urease_gamma"/>
    <property type="match status" value="1"/>
</dbReference>
<dbReference type="InterPro" id="IPR012010">
    <property type="entry name" value="Urease_gamma"/>
</dbReference>
<dbReference type="InterPro" id="IPR002026">
    <property type="entry name" value="Urease_gamma/gamma-beta_su"/>
</dbReference>
<dbReference type="InterPro" id="IPR036463">
    <property type="entry name" value="Urease_gamma_sf"/>
</dbReference>
<dbReference type="InterPro" id="IPR050069">
    <property type="entry name" value="Urease_subunit"/>
</dbReference>
<dbReference type="NCBIfam" id="NF009712">
    <property type="entry name" value="PRK13241.1"/>
    <property type="match status" value="1"/>
</dbReference>
<dbReference type="NCBIfam" id="TIGR00193">
    <property type="entry name" value="urease_gam"/>
    <property type="match status" value="1"/>
</dbReference>
<dbReference type="PANTHER" id="PTHR33569">
    <property type="entry name" value="UREASE"/>
    <property type="match status" value="1"/>
</dbReference>
<dbReference type="PANTHER" id="PTHR33569:SF1">
    <property type="entry name" value="UREASE"/>
    <property type="match status" value="1"/>
</dbReference>
<dbReference type="Pfam" id="PF00547">
    <property type="entry name" value="Urease_gamma"/>
    <property type="match status" value="1"/>
</dbReference>
<dbReference type="PIRSF" id="PIRSF001223">
    <property type="entry name" value="Urease_gamma"/>
    <property type="match status" value="1"/>
</dbReference>
<dbReference type="SUPFAM" id="SSF54111">
    <property type="entry name" value="Urease, gamma-subunit"/>
    <property type="match status" value="1"/>
</dbReference>
<evidence type="ECO:0000255" key="1">
    <source>
        <dbReference type="HAMAP-Rule" id="MF_00739"/>
    </source>
</evidence>
<comment type="catalytic activity">
    <reaction evidence="1">
        <text>urea + 2 H2O + H(+) = hydrogencarbonate + 2 NH4(+)</text>
        <dbReference type="Rhea" id="RHEA:20557"/>
        <dbReference type="ChEBI" id="CHEBI:15377"/>
        <dbReference type="ChEBI" id="CHEBI:15378"/>
        <dbReference type="ChEBI" id="CHEBI:16199"/>
        <dbReference type="ChEBI" id="CHEBI:17544"/>
        <dbReference type="ChEBI" id="CHEBI:28938"/>
        <dbReference type="EC" id="3.5.1.5"/>
    </reaction>
</comment>
<comment type="pathway">
    <text evidence="1">Nitrogen metabolism; urea degradation; CO(2) and NH(3) from urea (urease route): step 1/1.</text>
</comment>
<comment type="subunit">
    <text evidence="1">Heterotrimer of UreA (gamma), UreB (beta) and UreC (alpha) subunits. Three heterotrimers associate to form the active enzyme.</text>
</comment>
<comment type="subcellular location">
    <subcellularLocation>
        <location evidence="1">Cytoplasm</location>
    </subcellularLocation>
</comment>
<comment type="similarity">
    <text evidence="1">Belongs to the urease gamma subunit family.</text>
</comment>
<sequence>MELTPREKDKLLIFTASLLAERRRARGLKLNYPEAVALISAAVMEGARDGKTVAQLMSEGRTVLTRADVMDGIAELIPDIQVEATFPDGTKLVTVHQPIV</sequence>
<feature type="chain" id="PRO_1000046346" description="Urease subunit gamma">
    <location>
        <begin position="1"/>
        <end position="100"/>
    </location>
</feature>
<proteinExistence type="inferred from homology"/>
<keyword id="KW-0963">Cytoplasm</keyword>
<keyword id="KW-0378">Hydrolase</keyword>
<keyword id="KW-1185">Reference proteome</keyword>
<organism>
    <name type="scientific">Polaromonas naphthalenivorans (strain CJ2)</name>
    <dbReference type="NCBI Taxonomy" id="365044"/>
    <lineage>
        <taxon>Bacteria</taxon>
        <taxon>Pseudomonadati</taxon>
        <taxon>Pseudomonadota</taxon>
        <taxon>Betaproteobacteria</taxon>
        <taxon>Burkholderiales</taxon>
        <taxon>Comamonadaceae</taxon>
        <taxon>Polaromonas</taxon>
    </lineage>
</organism>